<dbReference type="EC" id="4.3.2.10" evidence="1"/>
<dbReference type="EC" id="3.5.1.2" evidence="1"/>
<dbReference type="EMBL" id="BA000017">
    <property type="protein sequence ID" value="BAB58837.1"/>
    <property type="molecule type" value="Genomic_DNA"/>
</dbReference>
<dbReference type="RefSeq" id="WP_000635623.1">
    <property type="nucleotide sequence ID" value="NC_002758.2"/>
</dbReference>
<dbReference type="SMR" id="P64363"/>
<dbReference type="KEGG" id="sav:SAV2675"/>
<dbReference type="HOGENOM" id="CLU_071837_2_2_9"/>
<dbReference type="PhylomeDB" id="P64363"/>
<dbReference type="UniPathway" id="UPA00031">
    <property type="reaction ID" value="UER00010"/>
</dbReference>
<dbReference type="Proteomes" id="UP000002481">
    <property type="component" value="Chromosome"/>
</dbReference>
<dbReference type="GO" id="GO:0005737">
    <property type="term" value="C:cytoplasm"/>
    <property type="evidence" value="ECO:0007669"/>
    <property type="project" value="UniProtKB-SubCell"/>
</dbReference>
<dbReference type="GO" id="GO:0004359">
    <property type="term" value="F:glutaminase activity"/>
    <property type="evidence" value="ECO:0007669"/>
    <property type="project" value="UniProtKB-EC"/>
</dbReference>
<dbReference type="GO" id="GO:0000107">
    <property type="term" value="F:imidazoleglycerol-phosphate synthase activity"/>
    <property type="evidence" value="ECO:0007669"/>
    <property type="project" value="UniProtKB-UniRule"/>
</dbReference>
<dbReference type="GO" id="GO:0016829">
    <property type="term" value="F:lyase activity"/>
    <property type="evidence" value="ECO:0007669"/>
    <property type="project" value="UniProtKB-KW"/>
</dbReference>
<dbReference type="GO" id="GO:0000105">
    <property type="term" value="P:L-histidine biosynthetic process"/>
    <property type="evidence" value="ECO:0007669"/>
    <property type="project" value="UniProtKB-UniRule"/>
</dbReference>
<dbReference type="CDD" id="cd01748">
    <property type="entry name" value="GATase1_IGP_Synthase"/>
    <property type="match status" value="1"/>
</dbReference>
<dbReference type="FunFam" id="3.40.50.880:FF:000064">
    <property type="entry name" value="Imidazole glycerol phosphate synthase subunit HisH"/>
    <property type="match status" value="1"/>
</dbReference>
<dbReference type="Gene3D" id="3.40.50.880">
    <property type="match status" value="1"/>
</dbReference>
<dbReference type="HAMAP" id="MF_00278">
    <property type="entry name" value="HisH"/>
    <property type="match status" value="1"/>
</dbReference>
<dbReference type="InterPro" id="IPR029062">
    <property type="entry name" value="Class_I_gatase-like"/>
</dbReference>
<dbReference type="InterPro" id="IPR017926">
    <property type="entry name" value="GATASE"/>
</dbReference>
<dbReference type="InterPro" id="IPR010139">
    <property type="entry name" value="Imidazole-glycPsynth_HisH"/>
</dbReference>
<dbReference type="NCBIfam" id="TIGR01855">
    <property type="entry name" value="IMP_synth_hisH"/>
    <property type="match status" value="1"/>
</dbReference>
<dbReference type="PANTHER" id="PTHR42701">
    <property type="entry name" value="IMIDAZOLE GLYCEROL PHOSPHATE SYNTHASE SUBUNIT HISH"/>
    <property type="match status" value="1"/>
</dbReference>
<dbReference type="PANTHER" id="PTHR42701:SF1">
    <property type="entry name" value="IMIDAZOLE GLYCEROL PHOSPHATE SYNTHASE SUBUNIT HISH"/>
    <property type="match status" value="1"/>
</dbReference>
<dbReference type="Pfam" id="PF00117">
    <property type="entry name" value="GATase"/>
    <property type="match status" value="1"/>
</dbReference>
<dbReference type="PIRSF" id="PIRSF000495">
    <property type="entry name" value="Amidotransf_hisH"/>
    <property type="match status" value="1"/>
</dbReference>
<dbReference type="SUPFAM" id="SSF52317">
    <property type="entry name" value="Class I glutamine amidotransferase-like"/>
    <property type="match status" value="1"/>
</dbReference>
<dbReference type="PROSITE" id="PS51273">
    <property type="entry name" value="GATASE_TYPE_1"/>
    <property type="match status" value="1"/>
</dbReference>
<protein>
    <recommendedName>
        <fullName evidence="1">Imidazole glycerol phosphate synthase subunit HisH</fullName>
        <ecNumber evidence="1">4.3.2.10</ecNumber>
    </recommendedName>
    <alternativeName>
        <fullName evidence="1">IGP synthase glutaminase subunit</fullName>
        <ecNumber evidence="1">3.5.1.2</ecNumber>
    </alternativeName>
    <alternativeName>
        <fullName evidence="1">IGP synthase subunit HisH</fullName>
    </alternativeName>
    <alternativeName>
        <fullName evidence="1">ImGP synthase subunit HisH</fullName>
        <shortName evidence="1">IGPS subunit HisH</shortName>
    </alternativeName>
</protein>
<reference key="1">
    <citation type="journal article" date="2001" name="Lancet">
        <title>Whole genome sequencing of meticillin-resistant Staphylococcus aureus.</title>
        <authorList>
            <person name="Kuroda M."/>
            <person name="Ohta T."/>
            <person name="Uchiyama I."/>
            <person name="Baba T."/>
            <person name="Yuzawa H."/>
            <person name="Kobayashi I."/>
            <person name="Cui L."/>
            <person name="Oguchi A."/>
            <person name="Aoki K."/>
            <person name="Nagai Y."/>
            <person name="Lian J.-Q."/>
            <person name="Ito T."/>
            <person name="Kanamori M."/>
            <person name="Matsumaru H."/>
            <person name="Maruyama A."/>
            <person name="Murakami H."/>
            <person name="Hosoyama A."/>
            <person name="Mizutani-Ui Y."/>
            <person name="Takahashi N.K."/>
            <person name="Sawano T."/>
            <person name="Inoue R."/>
            <person name="Kaito C."/>
            <person name="Sekimizu K."/>
            <person name="Hirakawa H."/>
            <person name="Kuhara S."/>
            <person name="Goto S."/>
            <person name="Yabuzaki J."/>
            <person name="Kanehisa M."/>
            <person name="Yamashita A."/>
            <person name="Oshima K."/>
            <person name="Furuya K."/>
            <person name="Yoshino C."/>
            <person name="Shiba T."/>
            <person name="Hattori M."/>
            <person name="Ogasawara N."/>
            <person name="Hayashi H."/>
            <person name="Hiramatsu K."/>
        </authorList>
    </citation>
    <scope>NUCLEOTIDE SEQUENCE [LARGE SCALE GENOMIC DNA]</scope>
    <source>
        <strain>Mu50 / ATCC 700699</strain>
    </source>
</reference>
<feature type="chain" id="PRO_0000152423" description="Imidazole glycerol phosphate synthase subunit HisH">
    <location>
        <begin position="1"/>
        <end position="192"/>
    </location>
</feature>
<feature type="domain" description="Glutamine amidotransferase type-1" evidence="1">
    <location>
        <begin position="1"/>
        <end position="192"/>
    </location>
</feature>
<feature type="active site" description="Nucleophile" evidence="1">
    <location>
        <position position="77"/>
    </location>
</feature>
<feature type="active site" evidence="1">
    <location>
        <position position="169"/>
    </location>
</feature>
<feature type="active site" evidence="1">
    <location>
        <position position="171"/>
    </location>
</feature>
<accession>P64363</accession>
<accession>Q99QW6</accession>
<sequence>MIVIVDYGLGNISNVKRAIEHLGYEVVVSNTSKIIDQAETIILPGVGHFKDAMSEIKRLNLNAILAKNTDKKMIGICLGMQLMYEHSDEGDASGLGFIPGNISRIQTEYPVPHLGWNNLVSKHPMLNQDVYFVHSYQAPMSENVIAYAQYGADIPAIVQFNNYIGIQFHPEKSGTYGLQILRQAIQGGFIND</sequence>
<comment type="function">
    <text evidence="1">IGPS catalyzes the conversion of PRFAR and glutamine to IGP, AICAR and glutamate. The HisH subunit catalyzes the hydrolysis of glutamine to glutamate and ammonia as part of the synthesis of IGP and AICAR. The resulting ammonia molecule is channeled to the active site of HisF.</text>
</comment>
<comment type="catalytic activity">
    <reaction evidence="1">
        <text>5-[(5-phospho-1-deoxy-D-ribulos-1-ylimino)methylamino]-1-(5-phospho-beta-D-ribosyl)imidazole-4-carboxamide + L-glutamine = D-erythro-1-(imidazol-4-yl)glycerol 3-phosphate + 5-amino-1-(5-phospho-beta-D-ribosyl)imidazole-4-carboxamide + L-glutamate + H(+)</text>
        <dbReference type="Rhea" id="RHEA:24793"/>
        <dbReference type="ChEBI" id="CHEBI:15378"/>
        <dbReference type="ChEBI" id="CHEBI:29985"/>
        <dbReference type="ChEBI" id="CHEBI:58278"/>
        <dbReference type="ChEBI" id="CHEBI:58359"/>
        <dbReference type="ChEBI" id="CHEBI:58475"/>
        <dbReference type="ChEBI" id="CHEBI:58525"/>
        <dbReference type="EC" id="4.3.2.10"/>
    </reaction>
</comment>
<comment type="catalytic activity">
    <reaction evidence="1">
        <text>L-glutamine + H2O = L-glutamate + NH4(+)</text>
        <dbReference type="Rhea" id="RHEA:15889"/>
        <dbReference type="ChEBI" id="CHEBI:15377"/>
        <dbReference type="ChEBI" id="CHEBI:28938"/>
        <dbReference type="ChEBI" id="CHEBI:29985"/>
        <dbReference type="ChEBI" id="CHEBI:58359"/>
        <dbReference type="EC" id="3.5.1.2"/>
    </reaction>
</comment>
<comment type="pathway">
    <text evidence="1">Amino-acid biosynthesis; L-histidine biosynthesis; L-histidine from 5-phospho-alpha-D-ribose 1-diphosphate: step 5/9.</text>
</comment>
<comment type="subunit">
    <text evidence="1">Heterodimer of HisH and HisF.</text>
</comment>
<comment type="subcellular location">
    <subcellularLocation>
        <location evidence="1">Cytoplasm</location>
    </subcellularLocation>
</comment>
<proteinExistence type="inferred from homology"/>
<organism>
    <name type="scientific">Staphylococcus aureus (strain Mu50 / ATCC 700699)</name>
    <dbReference type="NCBI Taxonomy" id="158878"/>
    <lineage>
        <taxon>Bacteria</taxon>
        <taxon>Bacillati</taxon>
        <taxon>Bacillota</taxon>
        <taxon>Bacilli</taxon>
        <taxon>Bacillales</taxon>
        <taxon>Staphylococcaceae</taxon>
        <taxon>Staphylococcus</taxon>
    </lineage>
</organism>
<evidence type="ECO:0000255" key="1">
    <source>
        <dbReference type="HAMAP-Rule" id="MF_00278"/>
    </source>
</evidence>
<name>HIS5_STAAM</name>
<keyword id="KW-0028">Amino-acid biosynthesis</keyword>
<keyword id="KW-0963">Cytoplasm</keyword>
<keyword id="KW-0315">Glutamine amidotransferase</keyword>
<keyword id="KW-0368">Histidine biosynthesis</keyword>
<keyword id="KW-0378">Hydrolase</keyword>
<keyword id="KW-0456">Lyase</keyword>
<gene>
    <name evidence="1" type="primary">hisH</name>
    <name type="ordered locus">SAV2675</name>
</gene>